<dbReference type="EC" id="4.3.2.1" evidence="1"/>
<dbReference type="EMBL" id="AF008220">
    <property type="protein sequence ID" value="AAC00321.1"/>
    <property type="molecule type" value="Genomic_DNA"/>
</dbReference>
<dbReference type="EMBL" id="AL009126">
    <property type="protein sequence ID" value="CAB14904.1"/>
    <property type="molecule type" value="Genomic_DNA"/>
</dbReference>
<dbReference type="PIR" id="C69589">
    <property type="entry name" value="C69589"/>
</dbReference>
<dbReference type="RefSeq" id="NP_390822.1">
    <property type="nucleotide sequence ID" value="NC_000964.3"/>
</dbReference>
<dbReference type="RefSeq" id="WP_003246018.1">
    <property type="nucleotide sequence ID" value="NZ_OZ025638.1"/>
</dbReference>
<dbReference type="SMR" id="O34858"/>
<dbReference type="FunCoup" id="O34858">
    <property type="interactions" value="606"/>
</dbReference>
<dbReference type="IntAct" id="O34858">
    <property type="interactions" value="4"/>
</dbReference>
<dbReference type="STRING" id="224308.BSU29440"/>
<dbReference type="PaxDb" id="224308-BSU29440"/>
<dbReference type="EnsemblBacteria" id="CAB14904">
    <property type="protein sequence ID" value="CAB14904"/>
    <property type="gene ID" value="BSU_29440"/>
</dbReference>
<dbReference type="GeneID" id="937966"/>
<dbReference type="KEGG" id="bsu:BSU29440"/>
<dbReference type="PATRIC" id="fig|224308.179.peg.3198"/>
<dbReference type="eggNOG" id="COG0165">
    <property type="taxonomic scope" value="Bacteria"/>
</dbReference>
<dbReference type="InParanoid" id="O34858"/>
<dbReference type="OrthoDB" id="9769623at2"/>
<dbReference type="PhylomeDB" id="O34858"/>
<dbReference type="BioCyc" id="BSUB:BSU29440-MONOMER"/>
<dbReference type="UniPathway" id="UPA00068">
    <property type="reaction ID" value="UER00114"/>
</dbReference>
<dbReference type="Proteomes" id="UP000001570">
    <property type="component" value="Chromosome"/>
</dbReference>
<dbReference type="GO" id="GO:0005829">
    <property type="term" value="C:cytosol"/>
    <property type="evidence" value="ECO:0000318"/>
    <property type="project" value="GO_Central"/>
</dbReference>
<dbReference type="GO" id="GO:0004056">
    <property type="term" value="F:argininosuccinate lyase activity"/>
    <property type="evidence" value="ECO:0000318"/>
    <property type="project" value="GO_Central"/>
</dbReference>
<dbReference type="GO" id="GO:0042450">
    <property type="term" value="P:arginine biosynthetic process via ornithine"/>
    <property type="evidence" value="ECO:0000318"/>
    <property type="project" value="GO_Central"/>
</dbReference>
<dbReference type="GO" id="GO:0006526">
    <property type="term" value="P:L-arginine biosynthetic process"/>
    <property type="evidence" value="ECO:0007669"/>
    <property type="project" value="UniProtKB-UniRule"/>
</dbReference>
<dbReference type="CDD" id="cd01359">
    <property type="entry name" value="Argininosuccinate_lyase"/>
    <property type="match status" value="1"/>
</dbReference>
<dbReference type="FunFam" id="1.10.275.10:FF:000002">
    <property type="entry name" value="Argininosuccinate lyase"/>
    <property type="match status" value="1"/>
</dbReference>
<dbReference type="FunFam" id="1.10.40.30:FF:000001">
    <property type="entry name" value="Argininosuccinate lyase"/>
    <property type="match status" value="1"/>
</dbReference>
<dbReference type="FunFam" id="1.20.200.10:FF:000002">
    <property type="entry name" value="Argininosuccinate lyase"/>
    <property type="match status" value="1"/>
</dbReference>
<dbReference type="Gene3D" id="1.10.40.30">
    <property type="entry name" value="Fumarase/aspartase (C-terminal domain)"/>
    <property type="match status" value="1"/>
</dbReference>
<dbReference type="Gene3D" id="1.20.200.10">
    <property type="entry name" value="Fumarase/aspartase (Central domain)"/>
    <property type="match status" value="1"/>
</dbReference>
<dbReference type="Gene3D" id="1.10.275.10">
    <property type="entry name" value="Fumarase/aspartase (N-terminal domain)"/>
    <property type="match status" value="1"/>
</dbReference>
<dbReference type="HAMAP" id="MF_00006">
    <property type="entry name" value="Arg_succ_lyase"/>
    <property type="match status" value="1"/>
</dbReference>
<dbReference type="InterPro" id="IPR029419">
    <property type="entry name" value="Arg_succ_lyase_C"/>
</dbReference>
<dbReference type="InterPro" id="IPR009049">
    <property type="entry name" value="Argininosuccinate_lyase"/>
</dbReference>
<dbReference type="InterPro" id="IPR024083">
    <property type="entry name" value="Fumarase/histidase_N"/>
</dbReference>
<dbReference type="InterPro" id="IPR020557">
    <property type="entry name" value="Fumarate_lyase_CS"/>
</dbReference>
<dbReference type="InterPro" id="IPR000362">
    <property type="entry name" value="Fumarate_lyase_fam"/>
</dbReference>
<dbReference type="InterPro" id="IPR022761">
    <property type="entry name" value="Fumarate_lyase_N"/>
</dbReference>
<dbReference type="InterPro" id="IPR008948">
    <property type="entry name" value="L-Aspartase-like"/>
</dbReference>
<dbReference type="NCBIfam" id="TIGR00838">
    <property type="entry name" value="argH"/>
    <property type="match status" value="1"/>
</dbReference>
<dbReference type="PANTHER" id="PTHR43814">
    <property type="entry name" value="ARGININOSUCCINATE LYASE"/>
    <property type="match status" value="1"/>
</dbReference>
<dbReference type="PANTHER" id="PTHR43814:SF1">
    <property type="entry name" value="ARGININOSUCCINATE LYASE"/>
    <property type="match status" value="1"/>
</dbReference>
<dbReference type="Pfam" id="PF14698">
    <property type="entry name" value="ASL_C2"/>
    <property type="match status" value="1"/>
</dbReference>
<dbReference type="Pfam" id="PF00206">
    <property type="entry name" value="Lyase_1"/>
    <property type="match status" value="1"/>
</dbReference>
<dbReference type="PRINTS" id="PR00145">
    <property type="entry name" value="ARGSUCLYASE"/>
</dbReference>
<dbReference type="PRINTS" id="PR00149">
    <property type="entry name" value="FUMRATELYASE"/>
</dbReference>
<dbReference type="SUPFAM" id="SSF48557">
    <property type="entry name" value="L-aspartase-like"/>
    <property type="match status" value="1"/>
</dbReference>
<dbReference type="PROSITE" id="PS00163">
    <property type="entry name" value="FUMARATE_LYASES"/>
    <property type="match status" value="1"/>
</dbReference>
<name>ARLY_BACSU</name>
<comment type="catalytic activity">
    <reaction evidence="1">
        <text>2-(N(omega)-L-arginino)succinate = fumarate + L-arginine</text>
        <dbReference type="Rhea" id="RHEA:24020"/>
        <dbReference type="ChEBI" id="CHEBI:29806"/>
        <dbReference type="ChEBI" id="CHEBI:32682"/>
        <dbReference type="ChEBI" id="CHEBI:57472"/>
        <dbReference type="EC" id="4.3.2.1"/>
    </reaction>
</comment>
<comment type="pathway">
    <text evidence="1">Amino-acid biosynthesis; L-arginine biosynthesis; L-arginine from L-ornithine and carbamoyl phosphate: step 3/3.</text>
</comment>
<comment type="subcellular location">
    <subcellularLocation>
        <location evidence="1">Cytoplasm</location>
    </subcellularLocation>
</comment>
<comment type="similarity">
    <text evidence="1">Belongs to the lyase 1 family. Argininosuccinate lyase subfamily.</text>
</comment>
<organism>
    <name type="scientific">Bacillus subtilis (strain 168)</name>
    <dbReference type="NCBI Taxonomy" id="224308"/>
    <lineage>
        <taxon>Bacteria</taxon>
        <taxon>Bacillati</taxon>
        <taxon>Bacillota</taxon>
        <taxon>Bacilli</taxon>
        <taxon>Bacillales</taxon>
        <taxon>Bacillaceae</taxon>
        <taxon>Bacillus</taxon>
    </lineage>
</organism>
<evidence type="ECO:0000255" key="1">
    <source>
        <dbReference type="HAMAP-Rule" id="MF_00006"/>
    </source>
</evidence>
<feature type="chain" id="PRO_0000137740" description="Argininosuccinate lyase">
    <location>
        <begin position="1"/>
        <end position="461"/>
    </location>
</feature>
<keyword id="KW-0028">Amino-acid biosynthesis</keyword>
<keyword id="KW-0055">Arginine biosynthesis</keyword>
<keyword id="KW-0963">Cytoplasm</keyword>
<keyword id="KW-0456">Lyase</keyword>
<keyword id="KW-1185">Reference proteome</keyword>
<gene>
    <name evidence="1" type="primary">argH</name>
    <name type="ordered locus">BSU29440</name>
</gene>
<accession>O34858</accession>
<reference key="1">
    <citation type="journal article" date="1997" name="Microbiology">
        <title>Sequencing and functional annotation of the Bacillus subtilis genes in the 200 kb rrnB-dnaB region.</title>
        <authorList>
            <person name="Lapidus A."/>
            <person name="Galleron N."/>
            <person name="Sorokin A."/>
            <person name="Ehrlich S.D."/>
        </authorList>
    </citation>
    <scope>NUCLEOTIDE SEQUENCE [GENOMIC DNA]</scope>
    <source>
        <strain>168</strain>
    </source>
</reference>
<reference key="2">
    <citation type="journal article" date="1997" name="Nature">
        <title>The complete genome sequence of the Gram-positive bacterium Bacillus subtilis.</title>
        <authorList>
            <person name="Kunst F."/>
            <person name="Ogasawara N."/>
            <person name="Moszer I."/>
            <person name="Albertini A.M."/>
            <person name="Alloni G."/>
            <person name="Azevedo V."/>
            <person name="Bertero M.G."/>
            <person name="Bessieres P."/>
            <person name="Bolotin A."/>
            <person name="Borchert S."/>
            <person name="Borriss R."/>
            <person name="Boursier L."/>
            <person name="Brans A."/>
            <person name="Braun M."/>
            <person name="Brignell S.C."/>
            <person name="Bron S."/>
            <person name="Brouillet S."/>
            <person name="Bruschi C.V."/>
            <person name="Caldwell B."/>
            <person name="Capuano V."/>
            <person name="Carter N.M."/>
            <person name="Choi S.-K."/>
            <person name="Codani J.-J."/>
            <person name="Connerton I.F."/>
            <person name="Cummings N.J."/>
            <person name="Daniel R.A."/>
            <person name="Denizot F."/>
            <person name="Devine K.M."/>
            <person name="Duesterhoeft A."/>
            <person name="Ehrlich S.D."/>
            <person name="Emmerson P.T."/>
            <person name="Entian K.-D."/>
            <person name="Errington J."/>
            <person name="Fabret C."/>
            <person name="Ferrari E."/>
            <person name="Foulger D."/>
            <person name="Fritz C."/>
            <person name="Fujita M."/>
            <person name="Fujita Y."/>
            <person name="Fuma S."/>
            <person name="Galizzi A."/>
            <person name="Galleron N."/>
            <person name="Ghim S.-Y."/>
            <person name="Glaser P."/>
            <person name="Goffeau A."/>
            <person name="Golightly E.J."/>
            <person name="Grandi G."/>
            <person name="Guiseppi G."/>
            <person name="Guy B.J."/>
            <person name="Haga K."/>
            <person name="Haiech J."/>
            <person name="Harwood C.R."/>
            <person name="Henaut A."/>
            <person name="Hilbert H."/>
            <person name="Holsappel S."/>
            <person name="Hosono S."/>
            <person name="Hullo M.-F."/>
            <person name="Itaya M."/>
            <person name="Jones L.-M."/>
            <person name="Joris B."/>
            <person name="Karamata D."/>
            <person name="Kasahara Y."/>
            <person name="Klaerr-Blanchard M."/>
            <person name="Klein C."/>
            <person name="Kobayashi Y."/>
            <person name="Koetter P."/>
            <person name="Koningstein G."/>
            <person name="Krogh S."/>
            <person name="Kumano M."/>
            <person name="Kurita K."/>
            <person name="Lapidus A."/>
            <person name="Lardinois S."/>
            <person name="Lauber J."/>
            <person name="Lazarevic V."/>
            <person name="Lee S.-M."/>
            <person name="Levine A."/>
            <person name="Liu H."/>
            <person name="Masuda S."/>
            <person name="Mauel C."/>
            <person name="Medigue C."/>
            <person name="Medina N."/>
            <person name="Mellado R.P."/>
            <person name="Mizuno M."/>
            <person name="Moestl D."/>
            <person name="Nakai S."/>
            <person name="Noback M."/>
            <person name="Noone D."/>
            <person name="O'Reilly M."/>
            <person name="Ogawa K."/>
            <person name="Ogiwara A."/>
            <person name="Oudega B."/>
            <person name="Park S.-H."/>
            <person name="Parro V."/>
            <person name="Pohl T.M."/>
            <person name="Portetelle D."/>
            <person name="Porwollik S."/>
            <person name="Prescott A.M."/>
            <person name="Presecan E."/>
            <person name="Pujic P."/>
            <person name="Purnelle B."/>
            <person name="Rapoport G."/>
            <person name="Rey M."/>
            <person name="Reynolds S."/>
            <person name="Rieger M."/>
            <person name="Rivolta C."/>
            <person name="Rocha E."/>
            <person name="Roche B."/>
            <person name="Rose M."/>
            <person name="Sadaie Y."/>
            <person name="Sato T."/>
            <person name="Scanlan E."/>
            <person name="Schleich S."/>
            <person name="Schroeter R."/>
            <person name="Scoffone F."/>
            <person name="Sekiguchi J."/>
            <person name="Sekowska A."/>
            <person name="Seror S.J."/>
            <person name="Serror P."/>
            <person name="Shin B.-S."/>
            <person name="Soldo B."/>
            <person name="Sorokin A."/>
            <person name="Tacconi E."/>
            <person name="Takagi T."/>
            <person name="Takahashi H."/>
            <person name="Takemaru K."/>
            <person name="Takeuchi M."/>
            <person name="Tamakoshi A."/>
            <person name="Tanaka T."/>
            <person name="Terpstra P."/>
            <person name="Tognoni A."/>
            <person name="Tosato V."/>
            <person name="Uchiyama S."/>
            <person name="Vandenbol M."/>
            <person name="Vannier F."/>
            <person name="Vassarotti A."/>
            <person name="Viari A."/>
            <person name="Wambutt R."/>
            <person name="Wedler E."/>
            <person name="Wedler H."/>
            <person name="Weitzenegger T."/>
            <person name="Winters P."/>
            <person name="Wipat A."/>
            <person name="Yamamoto H."/>
            <person name="Yamane K."/>
            <person name="Yasumoto K."/>
            <person name="Yata K."/>
            <person name="Yoshida K."/>
            <person name="Yoshikawa H.-F."/>
            <person name="Zumstein E."/>
            <person name="Yoshikawa H."/>
            <person name="Danchin A."/>
        </authorList>
    </citation>
    <scope>NUCLEOTIDE SEQUENCE [LARGE SCALE GENOMIC DNA]</scope>
    <source>
        <strain>168</strain>
    </source>
</reference>
<proteinExistence type="inferred from homology"/>
<sequence length="461" mass="51929">MKKLWGGRFQKTPEKWVDEFGASISFDQNLVAEDITGSLAHAAMLKKCGILTAEEELKIREGLNTLLQKAEEGALEFSVDYEDIHLNIEKMLIDEIGPLGGKLHTGRSRNDQVATDMHLYLKNHVGHIIELIEAFQSALIEKAEANVETILPGYTHLQRAQPISFAHHLLAYFWMLERDKERFQDSMKRINKSPLGCGALAGTTFPIDRDYSAELLGFDAIYENSLDGVSDRDFILEFLSNSSMLMMHLSRFSEEIILWCSQEFKFIELDDTYATGSSMMPQKKNPDMAELIRGKTGRVYGDMMGLFTIMKGLPLAYNKDLQEDKEGMFDTVKTVEGSLQIFTGMIQTMTVNKDVMKQATKQDFSNATELADYLAKKGMPFREAHEVVGKLVYTCIERGIYLSDMPFGEFQQASTLFEEDIYTVLDPYYAVEKRMSAGGTGFKQVEQALEKAKACVAAGVC</sequence>
<protein>
    <recommendedName>
        <fullName evidence="1">Argininosuccinate lyase</fullName>
        <shortName evidence="1">ASAL</shortName>
        <ecNumber evidence="1">4.3.2.1</ecNumber>
    </recommendedName>
    <alternativeName>
        <fullName evidence="1">Arginosuccinase</fullName>
    </alternativeName>
</protein>